<comment type="function">
    <text evidence="1">Small GTPase component of the coat protein complex II (COPII) which promotes the formation of transport vesicles from the endoplasmic reticulum (ER). The coat has two main functions, the physical deformation of the endoplasmic reticulum membrane into vesicles and the selection of cargo molecules. SAR1 controls the coat assembly in a stepwise manner. Activated SAR1-GTP binds to membranes first and recruits the SEC23/24 complex. These SEC23/24-SAR1 prebudding intermediates are then collected by the SEC13/31 complex as subunits polymerize to form coated transport vesicles. Conversion to SAR1-GDP triggers coat release and recycles COPII subunits (By similarity).</text>
</comment>
<comment type="catalytic activity">
    <reaction>
        <text>GTP + H2O = GDP + phosphate + H(+)</text>
        <dbReference type="Rhea" id="RHEA:19669"/>
        <dbReference type="ChEBI" id="CHEBI:15377"/>
        <dbReference type="ChEBI" id="CHEBI:15378"/>
        <dbReference type="ChEBI" id="CHEBI:37565"/>
        <dbReference type="ChEBI" id="CHEBI:43474"/>
        <dbReference type="ChEBI" id="CHEBI:58189"/>
    </reaction>
</comment>
<comment type="subunit">
    <text evidence="1">COPII is composed of at least 5 proteins: the SEC23/24 complex, the SEC13/31 complex and SAR1.</text>
</comment>
<comment type="subcellular location">
    <subcellularLocation>
        <location evidence="1">Cytoplasmic vesicle</location>
        <location evidence="1">COPII-coated vesicle membrane</location>
        <topology evidence="1">Peripheral membrane protein</topology>
        <orientation evidence="1">Cytoplasmic side</orientation>
    </subcellularLocation>
    <subcellularLocation>
        <location evidence="1">Endoplasmic reticulum membrane</location>
        <topology evidence="1">Peripheral membrane protein</topology>
        <orientation evidence="1">Cytoplasmic side</orientation>
    </subcellularLocation>
    <subcellularLocation>
        <location evidence="1">Golgi apparatus membrane</location>
        <topology evidence="1">Peripheral membrane protein</topology>
        <orientation evidence="1">Cytoplasmic side</orientation>
    </subcellularLocation>
</comment>
<comment type="similarity">
    <text evidence="2">Belongs to the small GTPase superfamily. SAR1 family.</text>
</comment>
<keyword id="KW-0968">Cytoplasmic vesicle</keyword>
<keyword id="KW-0256">Endoplasmic reticulum</keyword>
<keyword id="KW-0931">ER-Golgi transport</keyword>
<keyword id="KW-0333">Golgi apparatus</keyword>
<keyword id="KW-0342">GTP-binding</keyword>
<keyword id="KW-0378">Hydrolase</keyword>
<keyword id="KW-0472">Membrane</keyword>
<keyword id="KW-0547">Nucleotide-binding</keyword>
<keyword id="KW-0653">Protein transport</keyword>
<keyword id="KW-1185">Reference proteome</keyword>
<keyword id="KW-0813">Transport</keyword>
<dbReference type="EC" id="3.6.5.-"/>
<dbReference type="EMBL" id="AF216959">
    <property type="protein sequence ID" value="AAF27634.1"/>
    <property type="molecule type" value="Genomic_DNA"/>
</dbReference>
<dbReference type="EMBL" id="FN392319">
    <property type="protein sequence ID" value="CAY67545.1"/>
    <property type="molecule type" value="Genomic_DNA"/>
</dbReference>
<dbReference type="RefSeq" id="XP_002489826.1">
    <property type="nucleotide sequence ID" value="XM_002489781.1"/>
</dbReference>
<dbReference type="SMR" id="Q9P4C8"/>
<dbReference type="FunCoup" id="Q9P4C8">
    <property type="interactions" value="938"/>
</dbReference>
<dbReference type="IntAct" id="Q9P4C8">
    <property type="interactions" value="2"/>
</dbReference>
<dbReference type="MINT" id="Q9P4C8"/>
<dbReference type="STRING" id="644223.Q9P4C8"/>
<dbReference type="EnsemblFungi" id="CAY67545">
    <property type="protein sequence ID" value="CAY67545"/>
    <property type="gene ID" value="PAS_chr1-1_0180"/>
</dbReference>
<dbReference type="GeneID" id="8196684"/>
<dbReference type="KEGG" id="ppa:PAS_chr1-1_0180"/>
<dbReference type="eggNOG" id="KOG0077">
    <property type="taxonomic scope" value="Eukaryota"/>
</dbReference>
<dbReference type="HOGENOM" id="CLU_040729_6_0_1"/>
<dbReference type="InParanoid" id="Q9P4C8"/>
<dbReference type="OMA" id="GLWNKHG"/>
<dbReference type="OrthoDB" id="2011769at2759"/>
<dbReference type="Proteomes" id="UP000000314">
    <property type="component" value="Chromosome 1"/>
</dbReference>
<dbReference type="GO" id="GO:0030127">
    <property type="term" value="C:COPII vesicle coat"/>
    <property type="evidence" value="ECO:0007669"/>
    <property type="project" value="EnsemblFungi"/>
</dbReference>
<dbReference type="GO" id="GO:0070971">
    <property type="term" value="C:endoplasmic reticulum exit site"/>
    <property type="evidence" value="ECO:0007669"/>
    <property type="project" value="EnsemblFungi"/>
</dbReference>
<dbReference type="GO" id="GO:0005789">
    <property type="term" value="C:endoplasmic reticulum membrane"/>
    <property type="evidence" value="ECO:0007669"/>
    <property type="project" value="UniProtKB-SubCell"/>
</dbReference>
<dbReference type="GO" id="GO:0000139">
    <property type="term" value="C:Golgi membrane"/>
    <property type="evidence" value="ECO:0007669"/>
    <property type="project" value="UniProtKB-SubCell"/>
</dbReference>
<dbReference type="GO" id="GO:0044233">
    <property type="term" value="C:mitochondria-associated endoplasmic reticulum membrane contact site"/>
    <property type="evidence" value="ECO:0007669"/>
    <property type="project" value="EnsemblFungi"/>
</dbReference>
<dbReference type="GO" id="GO:0005739">
    <property type="term" value="C:mitochondrion"/>
    <property type="evidence" value="ECO:0007669"/>
    <property type="project" value="GOC"/>
</dbReference>
<dbReference type="GO" id="GO:0005525">
    <property type="term" value="F:GTP binding"/>
    <property type="evidence" value="ECO:0007669"/>
    <property type="project" value="UniProtKB-KW"/>
</dbReference>
<dbReference type="GO" id="GO:0003924">
    <property type="term" value="F:GTPase activity"/>
    <property type="evidence" value="ECO:0007669"/>
    <property type="project" value="EnsemblFungi"/>
</dbReference>
<dbReference type="GO" id="GO:0090158">
    <property type="term" value="P:endoplasmic reticulum membrane organization"/>
    <property type="evidence" value="ECO:0007669"/>
    <property type="project" value="EnsemblFungi"/>
</dbReference>
<dbReference type="GO" id="GO:0006888">
    <property type="term" value="P:endoplasmic reticulum to Golgi vesicle-mediated transport"/>
    <property type="evidence" value="ECO:0007669"/>
    <property type="project" value="EnsemblFungi"/>
</dbReference>
<dbReference type="GO" id="GO:0006886">
    <property type="term" value="P:intracellular protein transport"/>
    <property type="evidence" value="ECO:0007669"/>
    <property type="project" value="InterPro"/>
</dbReference>
<dbReference type="GO" id="GO:0000266">
    <property type="term" value="P:mitochondrial fission"/>
    <property type="evidence" value="ECO:0007669"/>
    <property type="project" value="EnsemblFungi"/>
</dbReference>
<dbReference type="GO" id="GO:0007006">
    <property type="term" value="P:mitochondrial membrane organization"/>
    <property type="evidence" value="ECO:0007669"/>
    <property type="project" value="EnsemblFungi"/>
</dbReference>
<dbReference type="GO" id="GO:0006998">
    <property type="term" value="P:nuclear envelope organization"/>
    <property type="evidence" value="ECO:0007669"/>
    <property type="project" value="EnsemblFungi"/>
</dbReference>
<dbReference type="GO" id="GO:1902953">
    <property type="term" value="P:positive regulation of ER to Golgi vesicle-mediated transport"/>
    <property type="evidence" value="ECO:0007669"/>
    <property type="project" value="EnsemblFungi"/>
</dbReference>
<dbReference type="GO" id="GO:0070863">
    <property type="term" value="P:positive regulation of protein exit from endoplasmic reticulum"/>
    <property type="evidence" value="ECO:0007669"/>
    <property type="project" value="EnsemblFungi"/>
</dbReference>
<dbReference type="GO" id="GO:0003400">
    <property type="term" value="P:regulation of COPII vesicle coating"/>
    <property type="evidence" value="ECO:0007669"/>
    <property type="project" value="EnsemblFungi"/>
</dbReference>
<dbReference type="GO" id="GO:0016050">
    <property type="term" value="P:vesicle organization"/>
    <property type="evidence" value="ECO:0007669"/>
    <property type="project" value="EnsemblFungi"/>
</dbReference>
<dbReference type="CDD" id="cd00879">
    <property type="entry name" value="Sar1"/>
    <property type="match status" value="1"/>
</dbReference>
<dbReference type="FunFam" id="3.40.50.300:FF:000161">
    <property type="entry name" value="Small COPII coat GTPase"/>
    <property type="match status" value="1"/>
</dbReference>
<dbReference type="Gene3D" id="3.40.50.300">
    <property type="entry name" value="P-loop containing nucleotide triphosphate hydrolases"/>
    <property type="match status" value="1"/>
</dbReference>
<dbReference type="InterPro" id="IPR027417">
    <property type="entry name" value="P-loop_NTPase"/>
</dbReference>
<dbReference type="InterPro" id="IPR005225">
    <property type="entry name" value="Small_GTP-bd"/>
</dbReference>
<dbReference type="InterPro" id="IPR006689">
    <property type="entry name" value="Small_GTPase_ARF/SAR"/>
</dbReference>
<dbReference type="InterPro" id="IPR006687">
    <property type="entry name" value="Small_GTPase_SAR1"/>
</dbReference>
<dbReference type="NCBIfam" id="TIGR00231">
    <property type="entry name" value="small_GTP"/>
    <property type="match status" value="1"/>
</dbReference>
<dbReference type="PANTHER" id="PTHR45684">
    <property type="entry name" value="RE74312P"/>
    <property type="match status" value="1"/>
</dbReference>
<dbReference type="Pfam" id="PF00025">
    <property type="entry name" value="Arf"/>
    <property type="match status" value="1"/>
</dbReference>
<dbReference type="PRINTS" id="PR00328">
    <property type="entry name" value="SAR1GTPBP"/>
</dbReference>
<dbReference type="SMART" id="SM00177">
    <property type="entry name" value="ARF"/>
    <property type="match status" value="1"/>
</dbReference>
<dbReference type="SMART" id="SM00178">
    <property type="entry name" value="SAR"/>
    <property type="match status" value="1"/>
</dbReference>
<dbReference type="SUPFAM" id="SSF52540">
    <property type="entry name" value="P-loop containing nucleoside triphosphate hydrolases"/>
    <property type="match status" value="1"/>
</dbReference>
<dbReference type="PROSITE" id="PS51422">
    <property type="entry name" value="SAR1"/>
    <property type="match status" value="1"/>
</dbReference>
<protein>
    <recommendedName>
        <fullName>Small COPII coat GTPase SAR1</fullName>
        <ecNumber>3.6.5.-</ecNumber>
    </recommendedName>
</protein>
<organism>
    <name type="scientific">Komagataella phaffii (strain GS115 / ATCC 20864)</name>
    <name type="common">Yeast</name>
    <name type="synonym">Pichia pastoris</name>
    <dbReference type="NCBI Taxonomy" id="644223"/>
    <lineage>
        <taxon>Eukaryota</taxon>
        <taxon>Fungi</taxon>
        <taxon>Dikarya</taxon>
        <taxon>Ascomycota</taxon>
        <taxon>Saccharomycotina</taxon>
        <taxon>Pichiomycetes</taxon>
        <taxon>Pichiales</taxon>
        <taxon>Pichiaceae</taxon>
        <taxon>Komagataella</taxon>
    </lineage>
</organism>
<sequence length="190" mass="21726">MWVLNWFQDVLASLGLWNKHAKLLFLGLDNAGKTTLLHMLKNDRLATLQPTWHPTSEELSIGNVRFTTFDLGGHEQARRVWKDYFPEVDGIVYLVDIADPERFEESRVELDALLKIEELSKVPVLVLGNKIDKSTAVSENELRHALGLMTTTGKDKVQLVEGQRPLEVFTCSIYLRQGYGEGIRWLSQYI</sequence>
<name>SAR1_KOMPG</name>
<proteinExistence type="inferred from homology"/>
<accession>Q9P4C8</accession>
<accession>C4QWC2</accession>
<evidence type="ECO:0000250" key="1"/>
<evidence type="ECO:0000305" key="2"/>
<feature type="chain" id="PRO_0000206272" description="Small COPII coat GTPase SAR1">
    <location>
        <begin position="1"/>
        <end position="190"/>
    </location>
</feature>
<feature type="binding site" evidence="1">
    <location>
        <begin position="27"/>
        <end position="34"/>
    </location>
    <ligand>
        <name>GTP</name>
        <dbReference type="ChEBI" id="CHEBI:37565"/>
    </ligand>
</feature>
<feature type="binding site" evidence="1">
    <location>
        <begin position="70"/>
        <end position="73"/>
    </location>
    <ligand>
        <name>GTP</name>
        <dbReference type="ChEBI" id="CHEBI:37565"/>
    </ligand>
</feature>
<feature type="binding site" evidence="1">
    <location>
        <begin position="129"/>
        <end position="132"/>
    </location>
    <ligand>
        <name>GTP</name>
        <dbReference type="ChEBI" id="CHEBI:37565"/>
    </ligand>
</feature>
<gene>
    <name type="primary">SAR1</name>
    <name type="ordered locus">PAS_chr1-1_0180</name>
</gene>
<reference key="1">
    <citation type="journal article" date="2000" name="Yeast">
        <title>Isolation of Pichia pastoris genes involved in ER-to-Golgi transport.</title>
        <authorList>
            <person name="Payne W.E."/>
            <person name="Kaiser C.A."/>
            <person name="Bevis B.J."/>
            <person name="Soderholm J."/>
            <person name="Fu D."/>
            <person name="Sears I.B."/>
            <person name="Glick B.S."/>
        </authorList>
    </citation>
    <scope>NUCLEOTIDE SEQUENCE [GENOMIC DNA]</scope>
</reference>
<reference key="2">
    <citation type="journal article" date="2009" name="Nat. Biotechnol.">
        <title>Genome sequence of the recombinant protein production host Pichia pastoris.</title>
        <authorList>
            <person name="De Schutter K."/>
            <person name="Lin Y.-C."/>
            <person name="Tiels P."/>
            <person name="Van Hecke A."/>
            <person name="Glinka S."/>
            <person name="Weber-Lehmann J."/>
            <person name="Rouze P."/>
            <person name="Van de Peer Y."/>
            <person name="Callewaert N."/>
        </authorList>
    </citation>
    <scope>NUCLEOTIDE SEQUENCE [LARGE SCALE GENOMIC DNA]</scope>
    <source>
        <strain>GS115 / ATCC 20864</strain>
    </source>
</reference>